<name>ARGB_GLUOX</name>
<protein>
    <recommendedName>
        <fullName evidence="1">Acetylglutamate kinase</fullName>
        <ecNumber evidence="1">2.7.2.8</ecNumber>
    </recommendedName>
    <alternativeName>
        <fullName evidence="1">N-acetyl-L-glutamate 5-phosphotransferase</fullName>
    </alternativeName>
    <alternativeName>
        <fullName evidence="1">NAG kinase</fullName>
        <shortName evidence="1">NAGK</shortName>
    </alternativeName>
</protein>
<organism>
    <name type="scientific">Gluconobacter oxydans (strain 621H)</name>
    <name type="common">Gluconobacter suboxydans</name>
    <dbReference type="NCBI Taxonomy" id="290633"/>
    <lineage>
        <taxon>Bacteria</taxon>
        <taxon>Pseudomonadati</taxon>
        <taxon>Pseudomonadota</taxon>
        <taxon>Alphaproteobacteria</taxon>
        <taxon>Acetobacterales</taxon>
        <taxon>Acetobacteraceae</taxon>
        <taxon>Gluconobacter</taxon>
    </lineage>
</organism>
<keyword id="KW-0028">Amino-acid biosynthesis</keyword>
<keyword id="KW-0055">Arginine biosynthesis</keyword>
<keyword id="KW-0067">ATP-binding</keyword>
<keyword id="KW-0963">Cytoplasm</keyword>
<keyword id="KW-0418">Kinase</keyword>
<keyword id="KW-0547">Nucleotide-binding</keyword>
<keyword id="KW-1185">Reference proteome</keyword>
<keyword id="KW-0808">Transferase</keyword>
<accession>Q5FPX8</accession>
<gene>
    <name evidence="1" type="primary">argB</name>
    <name type="ordered locus">GOX1829</name>
</gene>
<reference key="1">
    <citation type="journal article" date="2005" name="Nat. Biotechnol.">
        <title>Complete genome sequence of the acetic acid bacterium Gluconobacter oxydans.</title>
        <authorList>
            <person name="Prust C."/>
            <person name="Hoffmeister M."/>
            <person name="Liesegang H."/>
            <person name="Wiezer A."/>
            <person name="Fricke W.F."/>
            <person name="Ehrenreich A."/>
            <person name="Gottschalk G."/>
            <person name="Deppenmeier U."/>
        </authorList>
    </citation>
    <scope>NUCLEOTIDE SEQUENCE [LARGE SCALE GENOMIC DNA]</scope>
    <source>
        <strain>621H</strain>
    </source>
</reference>
<feature type="chain" id="PRO_0000264711" description="Acetylglutamate kinase">
    <location>
        <begin position="1"/>
        <end position="295"/>
    </location>
</feature>
<feature type="binding site" evidence="1">
    <location>
        <begin position="66"/>
        <end position="67"/>
    </location>
    <ligand>
        <name>substrate</name>
    </ligand>
</feature>
<feature type="binding site" evidence="1">
    <location>
        <position position="88"/>
    </location>
    <ligand>
        <name>substrate</name>
    </ligand>
</feature>
<feature type="binding site" evidence="1">
    <location>
        <position position="193"/>
    </location>
    <ligand>
        <name>substrate</name>
    </ligand>
</feature>
<feature type="site" description="Transition state stabilizer" evidence="1">
    <location>
        <position position="31"/>
    </location>
</feature>
<feature type="site" description="Transition state stabilizer" evidence="1">
    <location>
        <position position="253"/>
    </location>
</feature>
<evidence type="ECO:0000255" key="1">
    <source>
        <dbReference type="HAMAP-Rule" id="MF_00082"/>
    </source>
</evidence>
<evidence type="ECO:0000305" key="2"/>
<dbReference type="EC" id="2.7.2.8" evidence="1"/>
<dbReference type="EMBL" id="CP000009">
    <property type="protein sequence ID" value="AAW61568.1"/>
    <property type="status" value="ALT_INIT"/>
    <property type="molecule type" value="Genomic_DNA"/>
</dbReference>
<dbReference type="RefSeq" id="WP_011253349.1">
    <property type="nucleotide sequence ID" value="NZ_LT900338.1"/>
</dbReference>
<dbReference type="SMR" id="Q5FPX8"/>
<dbReference type="STRING" id="290633.GOX1829"/>
<dbReference type="KEGG" id="gox:GOX1829"/>
<dbReference type="eggNOG" id="COG0548">
    <property type="taxonomic scope" value="Bacteria"/>
</dbReference>
<dbReference type="HOGENOM" id="CLU_053680_0_0_5"/>
<dbReference type="UniPathway" id="UPA00068">
    <property type="reaction ID" value="UER00107"/>
</dbReference>
<dbReference type="Proteomes" id="UP000006375">
    <property type="component" value="Chromosome"/>
</dbReference>
<dbReference type="GO" id="GO:0005737">
    <property type="term" value="C:cytoplasm"/>
    <property type="evidence" value="ECO:0007669"/>
    <property type="project" value="UniProtKB-SubCell"/>
</dbReference>
<dbReference type="GO" id="GO:0003991">
    <property type="term" value="F:acetylglutamate kinase activity"/>
    <property type="evidence" value="ECO:0007669"/>
    <property type="project" value="UniProtKB-UniRule"/>
</dbReference>
<dbReference type="GO" id="GO:0005524">
    <property type="term" value="F:ATP binding"/>
    <property type="evidence" value="ECO:0007669"/>
    <property type="project" value="UniProtKB-UniRule"/>
</dbReference>
<dbReference type="GO" id="GO:0042450">
    <property type="term" value="P:arginine biosynthetic process via ornithine"/>
    <property type="evidence" value="ECO:0007669"/>
    <property type="project" value="UniProtKB-UniRule"/>
</dbReference>
<dbReference type="GO" id="GO:0006526">
    <property type="term" value="P:L-arginine biosynthetic process"/>
    <property type="evidence" value="ECO:0007669"/>
    <property type="project" value="UniProtKB-UniPathway"/>
</dbReference>
<dbReference type="CDD" id="cd04250">
    <property type="entry name" value="AAK_NAGK-C"/>
    <property type="match status" value="1"/>
</dbReference>
<dbReference type="FunFam" id="3.40.1160.10:FF:000004">
    <property type="entry name" value="Acetylglutamate kinase"/>
    <property type="match status" value="1"/>
</dbReference>
<dbReference type="Gene3D" id="3.40.1160.10">
    <property type="entry name" value="Acetylglutamate kinase-like"/>
    <property type="match status" value="1"/>
</dbReference>
<dbReference type="HAMAP" id="MF_00082">
    <property type="entry name" value="ArgB"/>
    <property type="match status" value="1"/>
</dbReference>
<dbReference type="InterPro" id="IPR036393">
    <property type="entry name" value="AceGlu_kinase-like_sf"/>
</dbReference>
<dbReference type="InterPro" id="IPR004662">
    <property type="entry name" value="AcgluKinase_fam"/>
</dbReference>
<dbReference type="InterPro" id="IPR037528">
    <property type="entry name" value="ArgB"/>
</dbReference>
<dbReference type="InterPro" id="IPR001048">
    <property type="entry name" value="Asp/Glu/Uridylate_kinase"/>
</dbReference>
<dbReference type="InterPro" id="IPR001057">
    <property type="entry name" value="Glu/AcGlu_kinase"/>
</dbReference>
<dbReference type="InterPro" id="IPR041727">
    <property type="entry name" value="NAGK-C"/>
</dbReference>
<dbReference type="NCBIfam" id="TIGR00761">
    <property type="entry name" value="argB"/>
    <property type="match status" value="1"/>
</dbReference>
<dbReference type="PANTHER" id="PTHR23342">
    <property type="entry name" value="N-ACETYLGLUTAMATE SYNTHASE"/>
    <property type="match status" value="1"/>
</dbReference>
<dbReference type="PANTHER" id="PTHR23342:SF0">
    <property type="entry name" value="N-ACETYLGLUTAMATE SYNTHASE, MITOCHONDRIAL"/>
    <property type="match status" value="1"/>
</dbReference>
<dbReference type="Pfam" id="PF00696">
    <property type="entry name" value="AA_kinase"/>
    <property type="match status" value="1"/>
</dbReference>
<dbReference type="PIRSF" id="PIRSF000728">
    <property type="entry name" value="NAGK"/>
    <property type="match status" value="1"/>
</dbReference>
<dbReference type="PRINTS" id="PR00474">
    <property type="entry name" value="GLU5KINASE"/>
</dbReference>
<dbReference type="SUPFAM" id="SSF53633">
    <property type="entry name" value="Carbamate kinase-like"/>
    <property type="match status" value="1"/>
</dbReference>
<proteinExistence type="inferred from homology"/>
<sequence>MNAEEAQQQAAILSSALPFLRRYAGDTIVVKYGGHAMGEGKLAHAFGYDISLLKLVGINPIVVHGGGPQISAMLDRLKIRSEFIDGLRVTDKSMVDVIEMVLSGSVNKQVTQLINRAGALAVGISGKDGGLIQARRLTRTKRDPDSEIEKVIDLGFVGQPEKIDPRVLYALLGAGLIPVIAPVGVGEDGETYNINADTAAGAIAGAVHASRLLMLTDVPGVLDENGKLIEELSADEAMRRIADGSISGGMIPKVETCLEAVRKGAKAAVILDGRVPHSCLLELFTRAGPGTLIKA</sequence>
<comment type="function">
    <text evidence="1">Catalyzes the ATP-dependent phosphorylation of N-acetyl-L-glutamate.</text>
</comment>
<comment type="catalytic activity">
    <reaction evidence="1">
        <text>N-acetyl-L-glutamate + ATP = N-acetyl-L-glutamyl 5-phosphate + ADP</text>
        <dbReference type="Rhea" id="RHEA:14629"/>
        <dbReference type="ChEBI" id="CHEBI:30616"/>
        <dbReference type="ChEBI" id="CHEBI:44337"/>
        <dbReference type="ChEBI" id="CHEBI:57936"/>
        <dbReference type="ChEBI" id="CHEBI:456216"/>
        <dbReference type="EC" id="2.7.2.8"/>
    </reaction>
</comment>
<comment type="pathway">
    <text evidence="1">Amino-acid biosynthesis; L-arginine biosynthesis; N(2)-acetyl-L-ornithine from L-glutamate: step 2/4.</text>
</comment>
<comment type="subcellular location">
    <subcellularLocation>
        <location evidence="1">Cytoplasm</location>
    </subcellularLocation>
</comment>
<comment type="similarity">
    <text evidence="1">Belongs to the acetylglutamate kinase family. ArgB subfamily.</text>
</comment>
<comment type="sequence caution" evidence="2">
    <conflict type="erroneous initiation">
        <sequence resource="EMBL-CDS" id="AAW61568"/>
    </conflict>
</comment>